<reference key="1">
    <citation type="journal article" date="1992" name="Mol. Microbiol.">
        <title>Sequence diversity within the argF, fbp and recA genes of natural isolates of Neisseria meningitidis: interspecies recombination within the argF gene.</title>
        <authorList>
            <person name="Zhou J."/>
            <person name="Spratt B.G."/>
        </authorList>
    </citation>
    <scope>NUCLEOTIDE SEQUENCE [GENOMIC DNA]</scope>
    <source>
        <strain>HF116 / Serogroup Z / Serotype NT</strain>
        <strain>N94II / Serogroup Y / Serotype NT</strain>
    </source>
</reference>
<reference key="2">
    <citation type="journal article" date="1999" name="Mol. Biol. Evol.">
        <title>Networks and groups within the genus Neisseria: analysis of argF, recA, rho, and 16S rRNA sequences from human Neisseria species.</title>
        <authorList>
            <person name="Smith N.H."/>
            <person name="Holmes E.C."/>
            <person name="Donovan G.M."/>
            <person name="Carpenter G.A."/>
            <person name="Spratt B.G."/>
        </authorList>
    </citation>
    <scope>NUCLEOTIDE SEQUENCE [GENOMIC DNA] OF 16-247</scope>
    <source>
        <strain>Bangor 13</strain>
    </source>
</reference>
<organism>
    <name type="scientific">Neisseria meningitidis</name>
    <dbReference type="NCBI Taxonomy" id="487"/>
    <lineage>
        <taxon>Bacteria</taxon>
        <taxon>Pseudomonadati</taxon>
        <taxon>Pseudomonadota</taxon>
        <taxon>Betaproteobacteria</taxon>
        <taxon>Neisseriales</taxon>
        <taxon>Neisseriaceae</taxon>
        <taxon>Neisseria</taxon>
    </lineage>
</organism>
<feature type="chain" id="PRO_0000112966" description="Ornithine carbamoyltransferase">
    <location>
        <begin position="1" status="less than"/>
        <end position="262" status="greater than"/>
    </location>
</feature>
<feature type="binding site" evidence="1">
    <location>
        <begin position="3"/>
        <end position="7"/>
    </location>
    <ligand>
        <name>carbamoyl phosphate</name>
        <dbReference type="ChEBI" id="CHEBI:58228"/>
    </ligand>
</feature>
<feature type="binding site" evidence="1">
    <location>
        <position position="30"/>
    </location>
    <ligand>
        <name>carbamoyl phosphate</name>
        <dbReference type="ChEBI" id="CHEBI:58228"/>
    </ligand>
</feature>
<feature type="binding site" evidence="1">
    <location>
        <position position="54"/>
    </location>
    <ligand>
        <name>carbamoyl phosphate</name>
        <dbReference type="ChEBI" id="CHEBI:58228"/>
    </ligand>
</feature>
<feature type="binding site" evidence="1">
    <location>
        <begin position="81"/>
        <end position="84"/>
    </location>
    <ligand>
        <name>carbamoyl phosphate</name>
        <dbReference type="ChEBI" id="CHEBI:58228"/>
    </ligand>
</feature>
<feature type="binding site" evidence="1">
    <location>
        <position position="114"/>
    </location>
    <ligand>
        <name>L-ornithine</name>
        <dbReference type="ChEBI" id="CHEBI:46911"/>
    </ligand>
</feature>
<feature type="binding site" evidence="1">
    <location>
        <position position="178"/>
    </location>
    <ligand>
        <name>L-ornithine</name>
        <dbReference type="ChEBI" id="CHEBI:46911"/>
    </ligand>
</feature>
<feature type="binding site" evidence="1">
    <location>
        <begin position="182"/>
        <end position="183"/>
    </location>
    <ligand>
        <name>L-ornithine</name>
        <dbReference type="ChEBI" id="CHEBI:46911"/>
    </ligand>
</feature>
<feature type="binding site" evidence="1">
    <location>
        <begin position="219"/>
        <end position="222"/>
    </location>
    <ligand>
        <name>carbamoyl phosphate</name>
        <dbReference type="ChEBI" id="CHEBI:58228"/>
    </ligand>
</feature>
<feature type="binding site" evidence="1">
    <location>
        <position position="247"/>
    </location>
    <ligand>
        <name>carbamoyl phosphate</name>
        <dbReference type="ChEBI" id="CHEBI:58228"/>
    </ligand>
</feature>
<feature type="site" description="Important for structural integrity" evidence="1">
    <location>
        <position position="94"/>
    </location>
</feature>
<feature type="sequence variant" description="In strain: HF116.">
    <original>A</original>
    <variation>G</variation>
    <location>
        <position position="50"/>
    </location>
</feature>
<feature type="sequence variant" description="In strain: HF116.">
    <original>G</original>
    <variation>A</variation>
    <location>
        <position position="57"/>
    </location>
</feature>
<feature type="sequence variant" description="In strain: HF116.">
    <original>V</original>
    <variation>T</variation>
    <location>
        <position position="60"/>
    </location>
</feature>
<feature type="sequence variant" description="In strain: HF116.">
    <original>A</original>
    <variation>T</variation>
    <location>
        <position position="65"/>
    </location>
</feature>
<feature type="sequence variant" description="In strain: HF116.">
    <original>L</original>
    <variation>W</variation>
    <location>
        <position position="100"/>
    </location>
</feature>
<feature type="non-terminal residue">
    <location>
        <position position="1"/>
    </location>
</feature>
<feature type="non-terminal residue">
    <location>
        <position position="262"/>
    </location>
</feature>
<comment type="function">
    <text evidence="1">Reversibly catalyzes the transfer of the carbamoyl group from carbamoyl phosphate (CP) to the N(epsilon) atom of ornithine (ORN) to produce L-citrulline.</text>
</comment>
<comment type="catalytic activity">
    <reaction>
        <text>carbamoyl phosphate + L-ornithine = L-citrulline + phosphate + H(+)</text>
        <dbReference type="Rhea" id="RHEA:19513"/>
        <dbReference type="ChEBI" id="CHEBI:15378"/>
        <dbReference type="ChEBI" id="CHEBI:43474"/>
        <dbReference type="ChEBI" id="CHEBI:46911"/>
        <dbReference type="ChEBI" id="CHEBI:57743"/>
        <dbReference type="ChEBI" id="CHEBI:58228"/>
        <dbReference type="EC" id="2.1.3.3"/>
    </reaction>
</comment>
<comment type="pathway">
    <text>Amino-acid biosynthesis; L-arginine biosynthesis; L-arginine from L-ornithine and carbamoyl phosphate: step 1/3.</text>
</comment>
<comment type="pathway">
    <text>Amino-acid degradation; L-arginine degradation via ADI pathway; carbamoyl phosphate from L-arginine: step 2/2.</text>
</comment>
<comment type="subcellular location">
    <subcellularLocation>
        <location evidence="1">Cytoplasm</location>
    </subcellularLocation>
</comment>
<comment type="similarity">
    <text evidence="2">Belongs to the aspartate/ornithine carbamoyltransferase superfamily. OTCase family.</text>
</comment>
<gene>
    <name type="primary">argF</name>
</gene>
<name>OTC_NEIME</name>
<dbReference type="EC" id="2.1.3.3"/>
<dbReference type="EMBL" id="X64864">
    <property type="protein sequence ID" value="CAA46076.1"/>
    <property type="molecule type" value="Genomic_DNA"/>
</dbReference>
<dbReference type="EMBL" id="X64866">
    <property type="protein sequence ID" value="CAA46078.1"/>
    <property type="molecule type" value="Genomic_DNA"/>
</dbReference>
<dbReference type="EMBL" id="AJ223889">
    <property type="protein sequence ID" value="CAA11620.1"/>
    <property type="molecule type" value="Genomic_DNA"/>
</dbReference>
<dbReference type="PIR" id="S24734">
    <property type="entry name" value="S24734"/>
</dbReference>
<dbReference type="PIR" id="S24741">
    <property type="entry name" value="S24741"/>
</dbReference>
<dbReference type="SMR" id="Q01325"/>
<dbReference type="UniPathway" id="UPA00068">
    <property type="reaction ID" value="UER00112"/>
</dbReference>
<dbReference type="UniPathway" id="UPA00254">
    <property type="reaction ID" value="UER00365"/>
</dbReference>
<dbReference type="GO" id="GO:0005737">
    <property type="term" value="C:cytoplasm"/>
    <property type="evidence" value="ECO:0007669"/>
    <property type="project" value="UniProtKB-SubCell"/>
</dbReference>
<dbReference type="GO" id="GO:0016597">
    <property type="term" value="F:amino acid binding"/>
    <property type="evidence" value="ECO:0007669"/>
    <property type="project" value="InterPro"/>
</dbReference>
<dbReference type="GO" id="GO:0004585">
    <property type="term" value="F:ornithine carbamoyltransferase activity"/>
    <property type="evidence" value="ECO:0007669"/>
    <property type="project" value="UniProtKB-EC"/>
</dbReference>
<dbReference type="GO" id="GO:0042450">
    <property type="term" value="P:arginine biosynthetic process via ornithine"/>
    <property type="evidence" value="ECO:0007669"/>
    <property type="project" value="TreeGrafter"/>
</dbReference>
<dbReference type="GO" id="GO:0019547">
    <property type="term" value="P:arginine catabolic process to ornithine"/>
    <property type="evidence" value="ECO:0007669"/>
    <property type="project" value="UniProtKB-UniPathway"/>
</dbReference>
<dbReference type="GO" id="GO:0019240">
    <property type="term" value="P:citrulline biosynthetic process"/>
    <property type="evidence" value="ECO:0007669"/>
    <property type="project" value="TreeGrafter"/>
</dbReference>
<dbReference type="GO" id="GO:0006526">
    <property type="term" value="P:L-arginine biosynthetic process"/>
    <property type="evidence" value="ECO:0007669"/>
    <property type="project" value="UniProtKB-UniPathway"/>
</dbReference>
<dbReference type="FunFam" id="3.40.50.1370:FF:000004">
    <property type="entry name" value="Ornithine carbamoyltransferase"/>
    <property type="match status" value="1"/>
</dbReference>
<dbReference type="Gene3D" id="3.40.50.1370">
    <property type="entry name" value="Aspartate/ornithine carbamoyltransferase"/>
    <property type="match status" value="2"/>
</dbReference>
<dbReference type="InterPro" id="IPR006132">
    <property type="entry name" value="Asp/Orn_carbamoyltranf_P-bd"/>
</dbReference>
<dbReference type="InterPro" id="IPR006130">
    <property type="entry name" value="Asp/Orn_carbamoylTrfase"/>
</dbReference>
<dbReference type="InterPro" id="IPR036901">
    <property type="entry name" value="Asp/Orn_carbamoylTrfase_sf"/>
</dbReference>
<dbReference type="InterPro" id="IPR006131">
    <property type="entry name" value="Asp_carbamoyltransf_Asp/Orn-bd"/>
</dbReference>
<dbReference type="InterPro" id="IPR002292">
    <property type="entry name" value="Orn/put_carbamltrans"/>
</dbReference>
<dbReference type="NCBIfam" id="TIGR00658">
    <property type="entry name" value="orni_carb_tr"/>
    <property type="match status" value="1"/>
</dbReference>
<dbReference type="PANTHER" id="PTHR45753:SF2">
    <property type="entry name" value="ORNITHINE CARBAMOYLTRANSFERASE"/>
    <property type="match status" value="1"/>
</dbReference>
<dbReference type="PANTHER" id="PTHR45753">
    <property type="entry name" value="ORNITHINE CARBAMOYLTRANSFERASE, MITOCHONDRIAL"/>
    <property type="match status" value="1"/>
</dbReference>
<dbReference type="Pfam" id="PF00185">
    <property type="entry name" value="OTCace"/>
    <property type="match status" value="1"/>
</dbReference>
<dbReference type="Pfam" id="PF02729">
    <property type="entry name" value="OTCace_N"/>
    <property type="match status" value="1"/>
</dbReference>
<dbReference type="PRINTS" id="PR00100">
    <property type="entry name" value="AOTCASE"/>
</dbReference>
<dbReference type="PRINTS" id="PR00102">
    <property type="entry name" value="OTCASE"/>
</dbReference>
<dbReference type="SUPFAM" id="SSF53671">
    <property type="entry name" value="Aspartate/ornithine carbamoyltransferase"/>
    <property type="match status" value="1"/>
</dbReference>
<proteinExistence type="inferred from homology"/>
<sequence>KTSTRTRCAFEVAARDQGAGVTYLEPSASQIGHKESIKDTARVLGRMYDAIEYRGFGQEVVEELAKYAGVPVFNGLTNEFHPTQMLADALTMREHSGKPLNQTAFAYVGDARYNMGNSLLILGAKLGMDVRIGAPQSLWPSEGIIAAAHAAAKETGAKITLTENAHEAVKNVDFIHTDVWVSMGEPKEVWQERIDLLKDYRVTPELMAASGNPQVKFMHCLPAFHNRETKVGEWIYETFGLNGVEVTEEVFESPASIVFDQA</sequence>
<accession>Q01325</accession>
<protein>
    <recommendedName>
        <fullName>Ornithine carbamoyltransferase</fullName>
        <shortName>OTCase</shortName>
        <ecNumber>2.1.3.3</ecNumber>
    </recommendedName>
</protein>
<keyword id="KW-0028">Amino-acid biosynthesis</keyword>
<keyword id="KW-0055">Arginine biosynthesis</keyword>
<keyword id="KW-0963">Cytoplasm</keyword>
<keyword id="KW-0808">Transferase</keyword>
<evidence type="ECO:0000250" key="1"/>
<evidence type="ECO:0000305" key="2"/>